<evidence type="ECO:0000255" key="1">
    <source>
        <dbReference type="HAMAP-Rule" id="MF_00038"/>
    </source>
</evidence>
<protein>
    <recommendedName>
        <fullName evidence="1">Phospho-N-acetylmuramoyl-pentapeptide-transferase</fullName>
        <ecNumber evidence="1">2.7.8.13</ecNumber>
    </recommendedName>
    <alternativeName>
        <fullName evidence="1">UDP-MurNAc-pentapeptide phosphotransferase</fullName>
    </alternativeName>
</protein>
<sequence>MLLLLAEYLQQFYKGFAVFQYLTLRGILGVLTALVLSLCYGPWMIRTLQNRQIGQSVRNDGPQSHLSKSGTPTMGGALILSSIGVSTLLWADLSNRYVWVVLLVTLLFGAIGWVDDYRKVIEKNSRGLPSRWKYFWQSVFGLGAAIFLYMTASTPVETTLILPMLKDYSIPLGAGFIVLTYFVIVGSSNAVNLTDGLDGLAIMPTVMVGGGLGIFCYLSGNVKFAEYLLIPYVPGAGELIVFCGALIGAGLGFLWFNTYPAQVFMGDVGALALGAALGTIAVIVRQEIVLFIMGGVFVMETLSVVIQVASFKLTGRRVFRMAPIHHHFELKGWPEPRVIVRFWIITVILVLIGLATLKLR</sequence>
<organism>
    <name type="scientific">Pseudomonas fluorescens (strain Pf0-1)</name>
    <dbReference type="NCBI Taxonomy" id="205922"/>
    <lineage>
        <taxon>Bacteria</taxon>
        <taxon>Pseudomonadati</taxon>
        <taxon>Pseudomonadota</taxon>
        <taxon>Gammaproteobacteria</taxon>
        <taxon>Pseudomonadales</taxon>
        <taxon>Pseudomonadaceae</taxon>
        <taxon>Pseudomonas</taxon>
    </lineage>
</organism>
<proteinExistence type="inferred from homology"/>
<gene>
    <name evidence="1" type="primary">mraY</name>
    <name type="ordered locus">Pfl01_4676</name>
</gene>
<dbReference type="EC" id="2.7.8.13" evidence="1"/>
<dbReference type="EMBL" id="CP000094">
    <property type="protein sequence ID" value="ABA76413.1"/>
    <property type="molecule type" value="Genomic_DNA"/>
</dbReference>
<dbReference type="RefSeq" id="WP_007956769.1">
    <property type="nucleotide sequence ID" value="NC_007492.2"/>
</dbReference>
<dbReference type="SMR" id="Q3K741"/>
<dbReference type="KEGG" id="pfo:Pfl01_4676"/>
<dbReference type="eggNOG" id="COG0472">
    <property type="taxonomic scope" value="Bacteria"/>
</dbReference>
<dbReference type="HOGENOM" id="CLU_023982_0_0_6"/>
<dbReference type="UniPathway" id="UPA00219"/>
<dbReference type="Proteomes" id="UP000002704">
    <property type="component" value="Chromosome"/>
</dbReference>
<dbReference type="GO" id="GO:0005886">
    <property type="term" value="C:plasma membrane"/>
    <property type="evidence" value="ECO:0007669"/>
    <property type="project" value="UniProtKB-SubCell"/>
</dbReference>
<dbReference type="GO" id="GO:0046872">
    <property type="term" value="F:metal ion binding"/>
    <property type="evidence" value="ECO:0007669"/>
    <property type="project" value="UniProtKB-KW"/>
</dbReference>
<dbReference type="GO" id="GO:0008963">
    <property type="term" value="F:phospho-N-acetylmuramoyl-pentapeptide-transferase activity"/>
    <property type="evidence" value="ECO:0007669"/>
    <property type="project" value="UniProtKB-UniRule"/>
</dbReference>
<dbReference type="GO" id="GO:0051992">
    <property type="term" value="F:UDP-N-acetylmuramoyl-L-alanyl-D-glutamyl-meso-2,6-diaminopimelyl-D-alanyl-D-alanine:undecaprenyl-phosphate transferase activity"/>
    <property type="evidence" value="ECO:0007669"/>
    <property type="project" value="RHEA"/>
</dbReference>
<dbReference type="GO" id="GO:0051301">
    <property type="term" value="P:cell division"/>
    <property type="evidence" value="ECO:0007669"/>
    <property type="project" value="UniProtKB-KW"/>
</dbReference>
<dbReference type="GO" id="GO:0071555">
    <property type="term" value="P:cell wall organization"/>
    <property type="evidence" value="ECO:0007669"/>
    <property type="project" value="UniProtKB-KW"/>
</dbReference>
<dbReference type="GO" id="GO:0009252">
    <property type="term" value="P:peptidoglycan biosynthetic process"/>
    <property type="evidence" value="ECO:0007669"/>
    <property type="project" value="UniProtKB-UniRule"/>
</dbReference>
<dbReference type="GO" id="GO:0008360">
    <property type="term" value="P:regulation of cell shape"/>
    <property type="evidence" value="ECO:0007669"/>
    <property type="project" value="UniProtKB-KW"/>
</dbReference>
<dbReference type="CDD" id="cd06852">
    <property type="entry name" value="GT_MraY"/>
    <property type="match status" value="1"/>
</dbReference>
<dbReference type="HAMAP" id="MF_00038">
    <property type="entry name" value="MraY"/>
    <property type="match status" value="1"/>
</dbReference>
<dbReference type="InterPro" id="IPR000715">
    <property type="entry name" value="Glycosyl_transferase_4"/>
</dbReference>
<dbReference type="InterPro" id="IPR003524">
    <property type="entry name" value="PNAcMuramoyl-5peptid_Trfase"/>
</dbReference>
<dbReference type="InterPro" id="IPR018480">
    <property type="entry name" value="PNAcMuramoyl-5peptid_Trfase_CS"/>
</dbReference>
<dbReference type="NCBIfam" id="TIGR00445">
    <property type="entry name" value="mraY"/>
    <property type="match status" value="1"/>
</dbReference>
<dbReference type="PANTHER" id="PTHR22926">
    <property type="entry name" value="PHOSPHO-N-ACETYLMURAMOYL-PENTAPEPTIDE-TRANSFERASE"/>
    <property type="match status" value="1"/>
</dbReference>
<dbReference type="PANTHER" id="PTHR22926:SF5">
    <property type="entry name" value="PHOSPHO-N-ACETYLMURAMOYL-PENTAPEPTIDE-TRANSFERASE HOMOLOG"/>
    <property type="match status" value="1"/>
</dbReference>
<dbReference type="Pfam" id="PF00953">
    <property type="entry name" value="Glycos_transf_4"/>
    <property type="match status" value="1"/>
</dbReference>
<dbReference type="Pfam" id="PF10555">
    <property type="entry name" value="MraY_sig1"/>
    <property type="match status" value="1"/>
</dbReference>
<dbReference type="PROSITE" id="PS01347">
    <property type="entry name" value="MRAY_1"/>
    <property type="match status" value="1"/>
</dbReference>
<dbReference type="PROSITE" id="PS01348">
    <property type="entry name" value="MRAY_2"/>
    <property type="match status" value="1"/>
</dbReference>
<reference key="1">
    <citation type="journal article" date="2009" name="Genome Biol.">
        <title>Genomic and genetic analyses of diversity and plant interactions of Pseudomonas fluorescens.</title>
        <authorList>
            <person name="Silby M.W."/>
            <person name="Cerdeno-Tarraga A.M."/>
            <person name="Vernikos G.S."/>
            <person name="Giddens S.R."/>
            <person name="Jackson R.W."/>
            <person name="Preston G.M."/>
            <person name="Zhang X.-X."/>
            <person name="Moon C.D."/>
            <person name="Gehrig S.M."/>
            <person name="Godfrey S.A.C."/>
            <person name="Knight C.G."/>
            <person name="Malone J.G."/>
            <person name="Robinson Z."/>
            <person name="Spiers A.J."/>
            <person name="Harris S."/>
            <person name="Challis G.L."/>
            <person name="Yaxley A.M."/>
            <person name="Harris D."/>
            <person name="Seeger K."/>
            <person name="Murphy L."/>
            <person name="Rutter S."/>
            <person name="Squares R."/>
            <person name="Quail M.A."/>
            <person name="Saunders E."/>
            <person name="Mavromatis K."/>
            <person name="Brettin T.S."/>
            <person name="Bentley S.D."/>
            <person name="Hothersall J."/>
            <person name="Stephens E."/>
            <person name="Thomas C.M."/>
            <person name="Parkhill J."/>
            <person name="Levy S.B."/>
            <person name="Rainey P.B."/>
            <person name="Thomson N.R."/>
        </authorList>
    </citation>
    <scope>NUCLEOTIDE SEQUENCE [LARGE SCALE GENOMIC DNA]</scope>
    <source>
        <strain>Pf0-1</strain>
    </source>
</reference>
<keyword id="KW-0131">Cell cycle</keyword>
<keyword id="KW-0132">Cell division</keyword>
<keyword id="KW-0997">Cell inner membrane</keyword>
<keyword id="KW-1003">Cell membrane</keyword>
<keyword id="KW-0133">Cell shape</keyword>
<keyword id="KW-0961">Cell wall biogenesis/degradation</keyword>
<keyword id="KW-0460">Magnesium</keyword>
<keyword id="KW-0472">Membrane</keyword>
<keyword id="KW-0479">Metal-binding</keyword>
<keyword id="KW-0573">Peptidoglycan synthesis</keyword>
<keyword id="KW-0808">Transferase</keyword>
<keyword id="KW-0812">Transmembrane</keyword>
<keyword id="KW-1133">Transmembrane helix</keyword>
<accession>Q3K741</accession>
<name>MRAY_PSEPF</name>
<feature type="chain" id="PRO_0000235470" description="Phospho-N-acetylmuramoyl-pentapeptide-transferase">
    <location>
        <begin position="1"/>
        <end position="360"/>
    </location>
</feature>
<feature type="transmembrane region" description="Helical" evidence="1">
    <location>
        <begin position="16"/>
        <end position="36"/>
    </location>
</feature>
<feature type="transmembrane region" description="Helical" evidence="1">
    <location>
        <begin position="73"/>
        <end position="93"/>
    </location>
</feature>
<feature type="transmembrane region" description="Helical" evidence="1">
    <location>
        <begin position="97"/>
        <end position="117"/>
    </location>
</feature>
<feature type="transmembrane region" description="Helical" evidence="1">
    <location>
        <begin position="134"/>
        <end position="154"/>
    </location>
</feature>
<feature type="transmembrane region" description="Helical" evidence="1">
    <location>
        <begin position="168"/>
        <end position="188"/>
    </location>
</feature>
<feature type="transmembrane region" description="Helical" evidence="1">
    <location>
        <begin position="199"/>
        <end position="219"/>
    </location>
</feature>
<feature type="transmembrane region" description="Helical" evidence="1">
    <location>
        <begin position="236"/>
        <end position="256"/>
    </location>
</feature>
<feature type="transmembrane region" description="Helical" evidence="1">
    <location>
        <begin position="263"/>
        <end position="283"/>
    </location>
</feature>
<feature type="transmembrane region" description="Helical" evidence="1">
    <location>
        <begin position="288"/>
        <end position="308"/>
    </location>
</feature>
<feature type="transmembrane region" description="Helical" evidence="1">
    <location>
        <begin position="338"/>
        <end position="358"/>
    </location>
</feature>
<comment type="function">
    <text evidence="1">Catalyzes the initial step of the lipid cycle reactions in the biosynthesis of the cell wall peptidoglycan: transfers peptidoglycan precursor phospho-MurNAc-pentapeptide from UDP-MurNAc-pentapeptide onto the lipid carrier undecaprenyl phosphate, yielding undecaprenyl-pyrophosphoryl-MurNAc-pentapeptide, known as lipid I.</text>
</comment>
<comment type="catalytic activity">
    <reaction evidence="1">
        <text>UDP-N-acetyl-alpha-D-muramoyl-L-alanyl-gamma-D-glutamyl-meso-2,6-diaminopimeloyl-D-alanyl-D-alanine + di-trans,octa-cis-undecaprenyl phosphate = di-trans,octa-cis-undecaprenyl diphospho-N-acetyl-alpha-D-muramoyl-L-alanyl-D-glutamyl-meso-2,6-diaminopimeloyl-D-alanyl-D-alanine + UMP</text>
        <dbReference type="Rhea" id="RHEA:28386"/>
        <dbReference type="ChEBI" id="CHEBI:57865"/>
        <dbReference type="ChEBI" id="CHEBI:60392"/>
        <dbReference type="ChEBI" id="CHEBI:61386"/>
        <dbReference type="ChEBI" id="CHEBI:61387"/>
        <dbReference type="EC" id="2.7.8.13"/>
    </reaction>
</comment>
<comment type="cofactor">
    <cofactor evidence="1">
        <name>Mg(2+)</name>
        <dbReference type="ChEBI" id="CHEBI:18420"/>
    </cofactor>
</comment>
<comment type="pathway">
    <text evidence="1">Cell wall biogenesis; peptidoglycan biosynthesis.</text>
</comment>
<comment type="subcellular location">
    <subcellularLocation>
        <location evidence="1">Cell inner membrane</location>
        <topology evidence="1">Multi-pass membrane protein</topology>
    </subcellularLocation>
</comment>
<comment type="similarity">
    <text evidence="1">Belongs to the glycosyltransferase 4 family. MraY subfamily.</text>
</comment>